<gene>
    <name type="primary">Scml4</name>
</gene>
<comment type="function">
    <text evidence="1">Putative Polycomb group (PcG) protein. PcG proteins act by forming multiprotein complexes, which are required to maintain the transcriptionally repressive state of homeotic genes throughout development (By similarity).</text>
</comment>
<comment type="subcellular location">
    <subcellularLocation>
        <location evidence="4">Nucleus</location>
    </subcellularLocation>
</comment>
<comment type="alternative products">
    <event type="alternative splicing"/>
    <isoform>
        <id>Q80VG1-1</id>
        <name>1</name>
        <sequence type="displayed"/>
    </isoform>
    <isoform>
        <id>Q80VG1-2</id>
        <name>2</name>
        <sequence type="described" ref="VSP_033947"/>
    </isoform>
</comment>
<comment type="similarity">
    <text evidence="4">Belongs to the SCM family.</text>
</comment>
<proteinExistence type="evidence at protein level"/>
<name>SCML4_MOUSE</name>
<feature type="chain" id="PRO_0000337172" description="Sex comb on midleg-like protein 4">
    <location>
        <begin position="1"/>
        <end position="408"/>
    </location>
</feature>
<feature type="domain" description="SAM">
    <location>
        <begin position="340"/>
        <end position="406"/>
    </location>
</feature>
<feature type="region of interest" description="Disordered" evidence="2">
    <location>
        <begin position="274"/>
        <end position="338"/>
    </location>
</feature>
<feature type="compositionally biased region" description="Polar residues" evidence="2">
    <location>
        <begin position="278"/>
        <end position="287"/>
    </location>
</feature>
<feature type="compositionally biased region" description="Low complexity" evidence="2">
    <location>
        <begin position="288"/>
        <end position="306"/>
    </location>
</feature>
<feature type="modified residue" description="Phosphoserine" evidence="5">
    <location>
        <position position="55"/>
    </location>
</feature>
<feature type="modified residue" description="Phosphoserine" evidence="5">
    <location>
        <position position="65"/>
    </location>
</feature>
<feature type="splice variant" id="VSP_033947" description="In isoform 2." evidence="3">
    <location>
        <begin position="1"/>
        <end position="58"/>
    </location>
</feature>
<feature type="sequence conflict" description="In Ref. 2; AAH43310." evidence="4" ref="2">
    <original>A</original>
    <variation>T</variation>
    <location>
        <position position="31"/>
    </location>
</feature>
<sequence length="408" mass="44445">MQTQRVPGRKRGRPPLHSTRVQMAVHNLYSASAASVPAVTIPKKRGRKPRYKIKSPVLMTPLALSPPRSTPEPDLSSIPQDAATIPSLVVPEALTVCLYINKQADVGPYLERRKLQQLPERLGPERPATVLQQAVQACIDCAHQPRLVFSLVKQGYRGELVSVSASFDGKQHLRSLPVVNSVGYVLRFLTKLCRSLLCDNLFSHLPFPGSIGASDKAQEREDGRTESAKVATAEECLANAVGMNRYAMDFSHRGSVTHSSSLYKRLTCGDSHLAGGPATTTSGSRTNPVPSGGSSSPGLRLPASSPKRNGTAIEGNRCAPSPSPEVQDTRRPSSRNPSTWTVEDVVRFVKDADPEALGPHVELFRKHEIDGNALLLLRSDMIMKYLGLKLGPALKLCYHIDKLKQAKF</sequence>
<keyword id="KW-0025">Alternative splicing</keyword>
<keyword id="KW-0539">Nucleus</keyword>
<keyword id="KW-0597">Phosphoprotein</keyword>
<keyword id="KW-1185">Reference proteome</keyword>
<keyword id="KW-0678">Repressor</keyword>
<keyword id="KW-0804">Transcription</keyword>
<keyword id="KW-0805">Transcription regulation</keyword>
<dbReference type="EMBL" id="AK034171">
    <property type="protein sequence ID" value="BAC28615.1"/>
    <property type="molecule type" value="mRNA"/>
</dbReference>
<dbReference type="EMBL" id="AK047972">
    <property type="protein sequence ID" value="BAE20663.1"/>
    <property type="molecule type" value="mRNA"/>
</dbReference>
<dbReference type="EMBL" id="AK172160">
    <property type="protein sequence ID" value="BAE42854.1"/>
    <property type="molecule type" value="mRNA"/>
</dbReference>
<dbReference type="EMBL" id="BC043310">
    <property type="protein sequence ID" value="AAH43310.1"/>
    <property type="molecule type" value="mRNA"/>
</dbReference>
<dbReference type="EMBL" id="AK220309">
    <property type="protein sequence ID" value="BAD90230.1"/>
    <property type="molecule type" value="mRNA"/>
</dbReference>
<dbReference type="CCDS" id="CCDS23816.1">
    <molecule id="Q80VG1-1"/>
</dbReference>
<dbReference type="CCDS" id="CCDS87999.1">
    <molecule id="Q80VG1-2"/>
</dbReference>
<dbReference type="RefSeq" id="NP_001346194.1">
    <molecule id="Q80VG1-2"/>
    <property type="nucleotide sequence ID" value="NM_001359265.1"/>
</dbReference>
<dbReference type="RefSeq" id="NP_766526.3">
    <molecule id="Q80VG1-1"/>
    <property type="nucleotide sequence ID" value="NM_172938.3"/>
</dbReference>
<dbReference type="RefSeq" id="XP_006512816.1">
    <property type="nucleotide sequence ID" value="XM_006512753.3"/>
</dbReference>
<dbReference type="SMR" id="Q80VG1"/>
<dbReference type="BioGRID" id="234479">
    <property type="interactions" value="1"/>
</dbReference>
<dbReference type="FunCoup" id="Q80VG1">
    <property type="interactions" value="38"/>
</dbReference>
<dbReference type="STRING" id="10090.ENSMUSP00000053157"/>
<dbReference type="iPTMnet" id="Q80VG1"/>
<dbReference type="PhosphoSitePlus" id="Q80VG1"/>
<dbReference type="PaxDb" id="10090-ENSMUSP00000053157"/>
<dbReference type="ProteomicsDB" id="256929">
    <molecule id="Q80VG1-1"/>
</dbReference>
<dbReference type="ProteomicsDB" id="256930">
    <molecule id="Q80VG1-2"/>
</dbReference>
<dbReference type="Antibodypedia" id="32183">
    <property type="antibodies" value="58 antibodies from 18 providers"/>
</dbReference>
<dbReference type="DNASU" id="268297"/>
<dbReference type="Ensembl" id="ENSMUST00000063063.14">
    <molecule id="Q80VG1-1"/>
    <property type="protein sequence ID" value="ENSMUSP00000053157.8"/>
    <property type="gene ID" value="ENSMUSG00000044770.15"/>
</dbReference>
<dbReference type="Ensembl" id="ENSMUST00000105494.8">
    <molecule id="Q80VG1-2"/>
    <property type="protein sequence ID" value="ENSMUSP00000101133.2"/>
    <property type="gene ID" value="ENSMUSG00000044770.15"/>
</dbReference>
<dbReference type="GeneID" id="268297"/>
<dbReference type="KEGG" id="mmu:268297"/>
<dbReference type="UCSC" id="uc007eza.2">
    <molecule id="Q80VG1-1"/>
    <property type="organism name" value="mouse"/>
</dbReference>
<dbReference type="AGR" id="MGI:2446140"/>
<dbReference type="CTD" id="256380"/>
<dbReference type="MGI" id="MGI:2446140">
    <property type="gene designation" value="Scml4"/>
</dbReference>
<dbReference type="VEuPathDB" id="HostDB:ENSMUSG00000044770"/>
<dbReference type="eggNOG" id="KOG3766">
    <property type="taxonomic scope" value="Eukaryota"/>
</dbReference>
<dbReference type="GeneTree" id="ENSGT00940000157463"/>
<dbReference type="HOGENOM" id="CLU_045829_0_0_1"/>
<dbReference type="InParanoid" id="Q80VG1"/>
<dbReference type="OMA" id="VKQGHSG"/>
<dbReference type="OrthoDB" id="5912862at2759"/>
<dbReference type="PhylomeDB" id="Q80VG1"/>
<dbReference type="TreeFam" id="TF106488"/>
<dbReference type="BioGRID-ORCS" id="268297">
    <property type="hits" value="4 hits in 77 CRISPR screens"/>
</dbReference>
<dbReference type="ChiTaRS" id="Scml4">
    <property type="organism name" value="mouse"/>
</dbReference>
<dbReference type="PRO" id="PR:Q80VG1"/>
<dbReference type="Proteomes" id="UP000000589">
    <property type="component" value="Chromosome 10"/>
</dbReference>
<dbReference type="RNAct" id="Q80VG1">
    <property type="molecule type" value="protein"/>
</dbReference>
<dbReference type="Bgee" id="ENSMUSG00000044770">
    <property type="expression patterns" value="Expressed in gastrula and 71 other cell types or tissues"/>
</dbReference>
<dbReference type="ExpressionAtlas" id="Q80VG1">
    <property type="expression patterns" value="baseline and differential"/>
</dbReference>
<dbReference type="GO" id="GO:0005634">
    <property type="term" value="C:nucleus"/>
    <property type="evidence" value="ECO:0007669"/>
    <property type="project" value="UniProtKB-SubCell"/>
</dbReference>
<dbReference type="CDD" id="cd09578">
    <property type="entry name" value="SAM_Scm"/>
    <property type="match status" value="1"/>
</dbReference>
<dbReference type="FunFam" id="1.10.150.50:FF:000018">
    <property type="entry name" value="Polycomb protein scmh1 isoform 4"/>
    <property type="match status" value="1"/>
</dbReference>
<dbReference type="Gene3D" id="3.90.1150.190">
    <property type="entry name" value="SLED domain"/>
    <property type="match status" value="1"/>
</dbReference>
<dbReference type="Gene3D" id="1.10.150.50">
    <property type="entry name" value="Transcription Factor, Ets-1"/>
    <property type="match status" value="1"/>
</dbReference>
<dbReference type="InterPro" id="IPR050548">
    <property type="entry name" value="PcG_chromatin_remod_factors"/>
</dbReference>
<dbReference type="InterPro" id="IPR001660">
    <property type="entry name" value="SAM"/>
</dbReference>
<dbReference type="InterPro" id="IPR013761">
    <property type="entry name" value="SAM/pointed_sf"/>
</dbReference>
<dbReference type="InterPro" id="IPR047531">
    <property type="entry name" value="SAM_Scm-like"/>
</dbReference>
<dbReference type="InterPro" id="IPR033763">
    <property type="entry name" value="SCML2_RBR"/>
</dbReference>
<dbReference type="InterPro" id="IPR021987">
    <property type="entry name" value="SLED"/>
</dbReference>
<dbReference type="InterPro" id="IPR038348">
    <property type="entry name" value="SLED_sf"/>
</dbReference>
<dbReference type="PANTHER" id="PTHR12247">
    <property type="entry name" value="POLYCOMB GROUP PROTEIN"/>
    <property type="match status" value="1"/>
</dbReference>
<dbReference type="PANTHER" id="PTHR12247:SF85">
    <property type="entry name" value="SEX COMB ON MIDLEG-LIKE PROTEIN 4"/>
    <property type="match status" value="1"/>
</dbReference>
<dbReference type="Pfam" id="PF17208">
    <property type="entry name" value="RBR"/>
    <property type="match status" value="1"/>
</dbReference>
<dbReference type="Pfam" id="PF00536">
    <property type="entry name" value="SAM_1"/>
    <property type="match status" value="1"/>
</dbReference>
<dbReference type="Pfam" id="PF12140">
    <property type="entry name" value="SLED"/>
    <property type="match status" value="1"/>
</dbReference>
<dbReference type="SMART" id="SM00454">
    <property type="entry name" value="SAM"/>
    <property type="match status" value="1"/>
</dbReference>
<dbReference type="SUPFAM" id="SSF47769">
    <property type="entry name" value="SAM/Pointed domain"/>
    <property type="match status" value="1"/>
</dbReference>
<evidence type="ECO:0000250" key="1"/>
<evidence type="ECO:0000256" key="2">
    <source>
        <dbReference type="SAM" id="MobiDB-lite"/>
    </source>
</evidence>
<evidence type="ECO:0000303" key="3">
    <source>
    </source>
</evidence>
<evidence type="ECO:0000305" key="4"/>
<evidence type="ECO:0007744" key="5">
    <source>
    </source>
</evidence>
<organism>
    <name type="scientific">Mus musculus</name>
    <name type="common">Mouse</name>
    <dbReference type="NCBI Taxonomy" id="10090"/>
    <lineage>
        <taxon>Eukaryota</taxon>
        <taxon>Metazoa</taxon>
        <taxon>Chordata</taxon>
        <taxon>Craniata</taxon>
        <taxon>Vertebrata</taxon>
        <taxon>Euteleostomi</taxon>
        <taxon>Mammalia</taxon>
        <taxon>Eutheria</taxon>
        <taxon>Euarchontoglires</taxon>
        <taxon>Glires</taxon>
        <taxon>Rodentia</taxon>
        <taxon>Myomorpha</taxon>
        <taxon>Muroidea</taxon>
        <taxon>Muridae</taxon>
        <taxon>Murinae</taxon>
        <taxon>Mus</taxon>
        <taxon>Mus</taxon>
    </lineage>
</organism>
<accession>Q80VG1</accession>
<accession>Q3TA16</accession>
<accession>Q3V358</accession>
<accession>Q5DU61</accession>
<accession>Q8CC08</accession>
<protein>
    <recommendedName>
        <fullName>Sex comb on midleg-like protein 4</fullName>
    </recommendedName>
</protein>
<reference key="1">
    <citation type="journal article" date="2005" name="Science">
        <title>The transcriptional landscape of the mammalian genome.</title>
        <authorList>
            <person name="Carninci P."/>
            <person name="Kasukawa T."/>
            <person name="Katayama S."/>
            <person name="Gough J."/>
            <person name="Frith M.C."/>
            <person name="Maeda N."/>
            <person name="Oyama R."/>
            <person name="Ravasi T."/>
            <person name="Lenhard B."/>
            <person name="Wells C."/>
            <person name="Kodzius R."/>
            <person name="Shimokawa K."/>
            <person name="Bajic V.B."/>
            <person name="Brenner S.E."/>
            <person name="Batalov S."/>
            <person name="Forrest A.R."/>
            <person name="Zavolan M."/>
            <person name="Davis M.J."/>
            <person name="Wilming L.G."/>
            <person name="Aidinis V."/>
            <person name="Allen J.E."/>
            <person name="Ambesi-Impiombato A."/>
            <person name="Apweiler R."/>
            <person name="Aturaliya R.N."/>
            <person name="Bailey T.L."/>
            <person name="Bansal M."/>
            <person name="Baxter L."/>
            <person name="Beisel K.W."/>
            <person name="Bersano T."/>
            <person name="Bono H."/>
            <person name="Chalk A.M."/>
            <person name="Chiu K.P."/>
            <person name="Choudhary V."/>
            <person name="Christoffels A."/>
            <person name="Clutterbuck D.R."/>
            <person name="Crowe M.L."/>
            <person name="Dalla E."/>
            <person name="Dalrymple B.P."/>
            <person name="de Bono B."/>
            <person name="Della Gatta G."/>
            <person name="di Bernardo D."/>
            <person name="Down T."/>
            <person name="Engstrom P."/>
            <person name="Fagiolini M."/>
            <person name="Faulkner G."/>
            <person name="Fletcher C.F."/>
            <person name="Fukushima T."/>
            <person name="Furuno M."/>
            <person name="Futaki S."/>
            <person name="Gariboldi M."/>
            <person name="Georgii-Hemming P."/>
            <person name="Gingeras T.R."/>
            <person name="Gojobori T."/>
            <person name="Green R.E."/>
            <person name="Gustincich S."/>
            <person name="Harbers M."/>
            <person name="Hayashi Y."/>
            <person name="Hensch T.K."/>
            <person name="Hirokawa N."/>
            <person name="Hill D."/>
            <person name="Huminiecki L."/>
            <person name="Iacono M."/>
            <person name="Ikeo K."/>
            <person name="Iwama A."/>
            <person name="Ishikawa T."/>
            <person name="Jakt M."/>
            <person name="Kanapin A."/>
            <person name="Katoh M."/>
            <person name="Kawasawa Y."/>
            <person name="Kelso J."/>
            <person name="Kitamura H."/>
            <person name="Kitano H."/>
            <person name="Kollias G."/>
            <person name="Krishnan S.P."/>
            <person name="Kruger A."/>
            <person name="Kummerfeld S.K."/>
            <person name="Kurochkin I.V."/>
            <person name="Lareau L.F."/>
            <person name="Lazarevic D."/>
            <person name="Lipovich L."/>
            <person name="Liu J."/>
            <person name="Liuni S."/>
            <person name="McWilliam S."/>
            <person name="Madan Babu M."/>
            <person name="Madera M."/>
            <person name="Marchionni L."/>
            <person name="Matsuda H."/>
            <person name="Matsuzawa S."/>
            <person name="Miki H."/>
            <person name="Mignone F."/>
            <person name="Miyake S."/>
            <person name="Morris K."/>
            <person name="Mottagui-Tabar S."/>
            <person name="Mulder N."/>
            <person name="Nakano N."/>
            <person name="Nakauchi H."/>
            <person name="Ng P."/>
            <person name="Nilsson R."/>
            <person name="Nishiguchi S."/>
            <person name="Nishikawa S."/>
            <person name="Nori F."/>
            <person name="Ohara O."/>
            <person name="Okazaki Y."/>
            <person name="Orlando V."/>
            <person name="Pang K.C."/>
            <person name="Pavan W.J."/>
            <person name="Pavesi G."/>
            <person name="Pesole G."/>
            <person name="Petrovsky N."/>
            <person name="Piazza S."/>
            <person name="Reed J."/>
            <person name="Reid J.F."/>
            <person name="Ring B.Z."/>
            <person name="Ringwald M."/>
            <person name="Rost B."/>
            <person name="Ruan Y."/>
            <person name="Salzberg S.L."/>
            <person name="Sandelin A."/>
            <person name="Schneider C."/>
            <person name="Schoenbach C."/>
            <person name="Sekiguchi K."/>
            <person name="Semple C.A."/>
            <person name="Seno S."/>
            <person name="Sessa L."/>
            <person name="Sheng Y."/>
            <person name="Shibata Y."/>
            <person name="Shimada H."/>
            <person name="Shimada K."/>
            <person name="Silva D."/>
            <person name="Sinclair B."/>
            <person name="Sperling S."/>
            <person name="Stupka E."/>
            <person name="Sugiura K."/>
            <person name="Sultana R."/>
            <person name="Takenaka Y."/>
            <person name="Taki K."/>
            <person name="Tammoja K."/>
            <person name="Tan S.L."/>
            <person name="Tang S."/>
            <person name="Taylor M.S."/>
            <person name="Tegner J."/>
            <person name="Teichmann S.A."/>
            <person name="Ueda H.R."/>
            <person name="van Nimwegen E."/>
            <person name="Verardo R."/>
            <person name="Wei C.L."/>
            <person name="Yagi K."/>
            <person name="Yamanishi H."/>
            <person name="Zabarovsky E."/>
            <person name="Zhu S."/>
            <person name="Zimmer A."/>
            <person name="Hide W."/>
            <person name="Bult C."/>
            <person name="Grimmond S.M."/>
            <person name="Teasdale R.D."/>
            <person name="Liu E.T."/>
            <person name="Brusic V."/>
            <person name="Quackenbush J."/>
            <person name="Wahlestedt C."/>
            <person name="Mattick J.S."/>
            <person name="Hume D.A."/>
            <person name="Kai C."/>
            <person name="Sasaki D."/>
            <person name="Tomaru Y."/>
            <person name="Fukuda S."/>
            <person name="Kanamori-Katayama M."/>
            <person name="Suzuki M."/>
            <person name="Aoki J."/>
            <person name="Arakawa T."/>
            <person name="Iida J."/>
            <person name="Imamura K."/>
            <person name="Itoh M."/>
            <person name="Kato T."/>
            <person name="Kawaji H."/>
            <person name="Kawagashira N."/>
            <person name="Kawashima T."/>
            <person name="Kojima M."/>
            <person name="Kondo S."/>
            <person name="Konno H."/>
            <person name="Nakano K."/>
            <person name="Ninomiya N."/>
            <person name="Nishio T."/>
            <person name="Okada M."/>
            <person name="Plessy C."/>
            <person name="Shibata K."/>
            <person name="Shiraki T."/>
            <person name="Suzuki S."/>
            <person name="Tagami M."/>
            <person name="Waki K."/>
            <person name="Watahiki A."/>
            <person name="Okamura-Oho Y."/>
            <person name="Suzuki H."/>
            <person name="Kawai J."/>
            <person name="Hayashizaki Y."/>
        </authorList>
    </citation>
    <scope>NUCLEOTIDE SEQUENCE [LARGE SCALE MRNA] (ISOFORMS 1 AND 2)</scope>
    <source>
        <strain>C57BL/6J</strain>
        <strain>NOD</strain>
        <tissue>Diencephalon</tissue>
        <tissue>Head</tissue>
        <tissue>Spleen</tissue>
    </source>
</reference>
<reference key="2">
    <citation type="journal article" date="2004" name="Genome Res.">
        <title>The status, quality, and expansion of the NIH full-length cDNA project: the Mammalian Gene Collection (MGC).</title>
        <authorList>
            <consortium name="The MGC Project Team"/>
        </authorList>
    </citation>
    <scope>NUCLEOTIDE SEQUENCE [LARGE SCALE MRNA] (ISOFORM 1)</scope>
    <source>
        <strain>Czech II</strain>
        <tissue>Mammary tumor</tissue>
    </source>
</reference>
<reference key="3">
    <citation type="journal article" date="2004" name="DNA Res.">
        <title>Prediction of the coding sequences of mouse homologues of FLJ genes: the complete nucleotide sequences of 110 mouse FLJ-homologous cDNAs identified by screening of terminal sequences of cDNA clones randomly sampled from size-fractionated libraries.</title>
        <authorList>
            <person name="Okazaki N."/>
            <person name="Kikuno R."/>
            <person name="Ohara R."/>
            <person name="Inamoto S."/>
            <person name="Koseki H."/>
            <person name="Hiraoka S."/>
            <person name="Saga Y."/>
            <person name="Kitamura H."/>
            <person name="Nakagawa T."/>
            <person name="Nagase T."/>
            <person name="Ohara O."/>
            <person name="Koga H."/>
        </authorList>
    </citation>
    <scope>NUCLEOTIDE SEQUENCE [LARGE SCALE MRNA] OF 47-408</scope>
    <source>
        <tissue>Fetal brain</tissue>
    </source>
</reference>
<reference key="4">
    <citation type="journal article" date="2010" name="Cell">
        <title>A tissue-specific atlas of mouse protein phosphorylation and expression.</title>
        <authorList>
            <person name="Huttlin E.L."/>
            <person name="Jedrychowski M.P."/>
            <person name="Elias J.E."/>
            <person name="Goswami T."/>
            <person name="Rad R."/>
            <person name="Beausoleil S.A."/>
            <person name="Villen J."/>
            <person name="Haas W."/>
            <person name="Sowa M.E."/>
            <person name="Gygi S.P."/>
        </authorList>
    </citation>
    <scope>PHOSPHORYLATION [LARGE SCALE ANALYSIS] AT SER-55 AND SER-65</scope>
    <scope>IDENTIFICATION BY MASS SPECTROMETRY [LARGE SCALE ANALYSIS]</scope>
    <source>
        <tissue>Spleen</tissue>
    </source>
</reference>